<protein>
    <recommendedName>
        <fullName>Nucleoside-triphosphatase 2</fullName>
        <ecNumber>3.6.1.15</ecNumber>
    </recommendedName>
    <alternativeName>
        <fullName>NTPase-II</fullName>
    </alternativeName>
    <alternativeName>
        <fullName>Nucleoside triphosphate hydrolase 2</fullName>
    </alternativeName>
    <alternativeName>
        <fullName>Nucleoside-triphosphatase II</fullName>
    </alternativeName>
</protein>
<comment type="function">
    <text>May perform an important processing step in the conversion of high energy nucleotides prior to uptake by the parasite. NTPAse-II has a specific activity 4.5-fold lower than NTPAse-I in hydrolysis of ATP. The primary difference between these isozymes lies in their ability to hydrolyze nucleoside triphosphate versus diphosphate substrates. While NTPAse-II hydrolyzes ATP to ADP and ADP to AMP at almost the same rate, NTPAse-I hydrolyzes ADP to AMP at a much slower rate (0.7% of the rate for ATP).</text>
</comment>
<comment type="catalytic activity">
    <reaction>
        <text>a ribonucleoside 5'-triphosphate + H2O = a ribonucleoside 5'-diphosphate + phosphate + H(+)</text>
        <dbReference type="Rhea" id="RHEA:23680"/>
        <dbReference type="ChEBI" id="CHEBI:15377"/>
        <dbReference type="ChEBI" id="CHEBI:15378"/>
        <dbReference type="ChEBI" id="CHEBI:43474"/>
        <dbReference type="ChEBI" id="CHEBI:57930"/>
        <dbReference type="ChEBI" id="CHEBI:61557"/>
        <dbReference type="EC" id="3.6.1.15"/>
    </reaction>
</comment>
<comment type="subunit">
    <text>Homotetramer.</text>
</comment>
<comment type="subcellular location">
    <subcellularLocation>
        <location>Secreted</location>
    </subcellularLocation>
    <subcellularLocation>
        <location>Parasitophorous vacuole</location>
    </subcellularLocation>
    <text>Found in host cell parasitophorous vacuole.</text>
</comment>
<comment type="similarity">
    <text evidence="3">Belongs to the GDA1/CD39 NTPase family.</text>
</comment>
<organism>
    <name type="scientific">Toxoplasma gondii</name>
    <dbReference type="NCBI Taxonomy" id="5811"/>
    <lineage>
        <taxon>Eukaryota</taxon>
        <taxon>Sar</taxon>
        <taxon>Alveolata</taxon>
        <taxon>Apicomplexa</taxon>
        <taxon>Conoidasida</taxon>
        <taxon>Coccidia</taxon>
        <taxon>Eucoccidiorida</taxon>
        <taxon>Eimeriorina</taxon>
        <taxon>Sarcocystidae</taxon>
        <taxon>Toxoplasma</taxon>
    </lineage>
</organism>
<reference key="1">
    <citation type="journal article" date="1995" name="J. Biol. Chem.">
        <title>Biochemical and molecular characterization of nucleoside triphosphate hydrolase isozymes from the parasitic protozoan Toxoplasma gondii.</title>
        <authorList>
            <person name="Asai T."/>
            <person name="Miura S."/>
            <person name="Sibley L.D."/>
            <person name="Okabayashi H."/>
            <person name="Takeuchi T."/>
        </authorList>
    </citation>
    <scope>NUCLEOTIDE SEQUENCE [MRNA]</scope>
    <scope>PARTIAL PROTEIN SEQUENCE</scope>
    <scope>CHARACTERIZATION</scope>
    <source>
        <strain>Beverley</strain>
        <strain>RH</strain>
    </source>
</reference>
<reference key="2">
    <citation type="journal article" date="1994" name="J. Biol. Chem.">
        <title>Tandemly repeated genes encode nucleoside triphosphate hydrolase isoforms secreted into the parasitophorous vacuole of Toxoplasma gondii.</title>
        <authorList>
            <person name="Bermudes D."/>
            <person name="Peck K.R."/>
            <person name="Afifi M.A."/>
            <person name="Beckers C.J.M."/>
            <person name="Joiner K.A."/>
        </authorList>
    </citation>
    <scope>NUCLEOTIDE SEQUENCE [MRNA]</scope>
    <source>
        <strain>RH</strain>
    </source>
</reference>
<reference key="3">
    <citation type="journal article" date="1989" name="Gene">
        <title>Cloning, expression and nucleotide sequence of the gene fragment encoding an antigenic portion of the nucleoside triphosphate hydrolase of Toxoplasma gondii.</title>
        <authorList>
            <person name="Johnson A.M."/>
            <person name="Illana S."/>
            <person name="McDonald P.J."/>
            <person name="Asai T."/>
        </authorList>
    </citation>
    <scope>NUCLEOTIDE SEQUENCE [GENOMIC DNA] OF 334-523</scope>
    <source>
        <strain>RH</strain>
    </source>
</reference>
<gene>
    <name type="primary">NTP1</name>
</gene>
<accession>Q27895</accession>
<accession>Q27798</accession>
<accession>Q27801</accession>
<evidence type="ECO:0000250" key="1"/>
<evidence type="ECO:0000255" key="2"/>
<evidence type="ECO:0000305" key="3"/>
<evidence type="ECO:0007829" key="4">
    <source>
        <dbReference type="PDB" id="4A5B"/>
    </source>
</evidence>
<evidence type="ECO:0007829" key="5">
    <source>
        <dbReference type="PDB" id="4JEP"/>
    </source>
</evidence>
<evidence type="ECO:0007829" key="6">
    <source>
        <dbReference type="PDB" id="4KH4"/>
    </source>
</evidence>
<evidence type="ECO:0007829" key="7">
    <source>
        <dbReference type="PDB" id="4KH5"/>
    </source>
</evidence>
<evidence type="ECO:0007829" key="8">
    <source>
        <dbReference type="PDB" id="4KH6"/>
    </source>
</evidence>
<keyword id="KW-0002">3D-structure</keyword>
<keyword id="KW-0903">Direct protein sequencing</keyword>
<keyword id="KW-0325">Glycoprotein</keyword>
<keyword id="KW-0378">Hydrolase</keyword>
<keyword id="KW-0964">Secreted</keyword>
<keyword id="KW-0732">Signal</keyword>
<feature type="signal peptide">
    <location>
        <begin position="1"/>
        <end position="25"/>
    </location>
</feature>
<feature type="chain" id="PRO_0000019912" description="Nucleoside-triphosphatase 2">
    <location>
        <begin position="26"/>
        <end position="628"/>
    </location>
</feature>
<feature type="active site" description="Proton acceptor" evidence="1">
    <location>
        <position position="236"/>
    </location>
</feature>
<feature type="glycosylation site" description="N-linked (GlcNAc...) asparagine" evidence="2">
    <location>
        <position position="432"/>
    </location>
</feature>
<feature type="sequence variant" description="In strain: Beverley.">
    <original>Y</original>
    <variation>H</variation>
    <location>
        <position position="6"/>
    </location>
</feature>
<feature type="sequence variant" description="In strain: Beverley.">
    <original>K</original>
    <variation>R</variation>
    <location>
        <position position="91"/>
    </location>
</feature>
<feature type="sequence variant" description="In strain: Beverley.">
    <original>Q</original>
    <variation>R</variation>
    <location>
        <position position="101"/>
    </location>
</feature>
<feature type="sequence conflict" description="In Ref. 3; AAA30143." evidence="3" ref="3">
    <original>G</original>
    <variation>R</variation>
    <location>
        <position position="334"/>
    </location>
</feature>
<feature type="sequence conflict" description="In Ref. 3." evidence="3" ref="3">
    <original>V</original>
    <variation>L</variation>
    <location>
        <position position="370"/>
    </location>
</feature>
<feature type="sequence conflict" description="In Ref. 3." evidence="3" ref="3">
    <original>V</original>
    <variation>L</variation>
    <location>
        <position position="372"/>
    </location>
</feature>
<feature type="sequence conflict" description="In Ref. 3; AAA30143." evidence="3" ref="3">
    <original>H</original>
    <variation>N</variation>
    <location>
        <position position="399"/>
    </location>
</feature>
<feature type="sequence conflict" description="In Ref. 3; AAA30143." evidence="3" ref="3">
    <original>E</original>
    <variation>K</variation>
    <location>
        <position position="437"/>
    </location>
</feature>
<feature type="sequence conflict" description="In Ref. 3." evidence="3" ref="3">
    <original>FI</original>
    <variation>IV</variation>
    <location>
        <begin position="488"/>
        <end position="489"/>
    </location>
</feature>
<feature type="sequence conflict" description="In Ref. 3." evidence="3" ref="3">
    <original>REM</original>
    <variation>GGS</variation>
    <location>
        <begin position="492"/>
        <end position="494"/>
    </location>
</feature>
<feature type="sequence conflict" description="In Ref. 3." evidence="3" ref="3">
    <original>S</original>
    <variation>A</variation>
    <location>
        <position position="497"/>
    </location>
</feature>
<feature type="sequence conflict" description="In Ref. 3." evidence="3" ref="3">
    <original>D</original>
    <variation>N</variation>
    <location>
        <position position="499"/>
    </location>
</feature>
<feature type="sequence conflict" description="In Ref. 3; AAA30143." evidence="3" ref="3">
    <original>R</original>
    <variation>G</variation>
    <location>
        <position position="523"/>
    </location>
</feature>
<feature type="turn" evidence="8">
    <location>
        <begin position="35"/>
        <end position="37"/>
    </location>
</feature>
<feature type="helix" evidence="8">
    <location>
        <begin position="38"/>
        <end position="55"/>
    </location>
</feature>
<feature type="strand" evidence="8">
    <location>
        <begin position="60"/>
        <end position="71"/>
    </location>
</feature>
<feature type="strand" evidence="8">
    <location>
        <begin position="76"/>
        <end position="88"/>
    </location>
</feature>
<feature type="turn" evidence="8">
    <location>
        <begin position="89"/>
        <end position="91"/>
    </location>
</feature>
<feature type="strand" evidence="8">
    <location>
        <begin position="92"/>
        <end position="95"/>
    </location>
</feature>
<feature type="helix" evidence="8">
    <location>
        <begin position="97"/>
        <end position="99"/>
    </location>
</feature>
<feature type="strand" evidence="8">
    <location>
        <begin position="101"/>
        <end position="105"/>
    </location>
</feature>
<feature type="helix" evidence="8">
    <location>
        <begin position="112"/>
        <end position="123"/>
    </location>
</feature>
<feature type="turn" evidence="8">
    <location>
        <begin position="126"/>
        <end position="129"/>
    </location>
</feature>
<feature type="helix" evidence="8">
    <location>
        <begin position="135"/>
        <end position="141"/>
    </location>
</feature>
<feature type="helix" evidence="8">
    <location>
        <begin position="142"/>
        <end position="167"/>
    </location>
</feature>
<feature type="helix" evidence="8">
    <location>
        <begin position="170"/>
        <end position="179"/>
    </location>
</feature>
<feature type="strand" evidence="8">
    <location>
        <begin position="181"/>
        <end position="187"/>
    </location>
</feature>
<feature type="helix" evidence="8">
    <location>
        <begin position="189"/>
        <end position="192"/>
    </location>
</feature>
<feature type="helix" evidence="8">
    <location>
        <begin position="198"/>
        <end position="210"/>
    </location>
</feature>
<feature type="strand" evidence="4">
    <location>
        <begin position="215"/>
        <end position="217"/>
    </location>
</feature>
<feature type="turn" evidence="8">
    <location>
        <begin position="225"/>
        <end position="227"/>
    </location>
</feature>
<feature type="strand" evidence="8">
    <location>
        <begin position="228"/>
        <end position="230"/>
    </location>
</feature>
<feature type="helix" evidence="8">
    <location>
        <begin position="233"/>
        <end position="247"/>
    </location>
</feature>
<feature type="strand" evidence="5">
    <location>
        <begin position="252"/>
        <end position="254"/>
    </location>
</feature>
<feature type="turn" evidence="8">
    <location>
        <begin position="255"/>
        <end position="257"/>
    </location>
</feature>
<feature type="strand" evidence="8">
    <location>
        <begin position="258"/>
        <end position="260"/>
    </location>
</feature>
<feature type="strand" evidence="8">
    <location>
        <begin position="266"/>
        <end position="270"/>
    </location>
</feature>
<feature type="strand" evidence="8">
    <location>
        <begin position="274"/>
        <end position="278"/>
    </location>
</feature>
<feature type="strand" evidence="8">
    <location>
        <begin position="280"/>
        <end position="288"/>
    </location>
</feature>
<feature type="helix" evidence="6">
    <location>
        <begin position="290"/>
        <end position="292"/>
    </location>
</feature>
<feature type="strand" evidence="6">
    <location>
        <begin position="297"/>
        <end position="299"/>
    </location>
</feature>
<feature type="turn" evidence="8">
    <location>
        <begin position="304"/>
        <end position="308"/>
    </location>
</feature>
<feature type="strand" evidence="5">
    <location>
        <begin position="312"/>
        <end position="314"/>
    </location>
</feature>
<feature type="strand" evidence="8">
    <location>
        <begin position="318"/>
        <end position="325"/>
    </location>
</feature>
<feature type="helix" evidence="8">
    <location>
        <begin position="329"/>
        <end position="340"/>
    </location>
</feature>
<feature type="turn" evidence="8">
    <location>
        <begin position="344"/>
        <end position="346"/>
    </location>
</feature>
<feature type="strand" evidence="8">
    <location>
        <begin position="350"/>
        <end position="354"/>
    </location>
</feature>
<feature type="strand" evidence="8">
    <location>
        <begin position="362"/>
        <end position="366"/>
    </location>
</feature>
<feature type="strand" evidence="8">
    <location>
        <begin position="370"/>
        <end position="372"/>
    </location>
</feature>
<feature type="strand" evidence="8">
    <location>
        <begin position="378"/>
        <end position="380"/>
    </location>
</feature>
<feature type="helix" evidence="8">
    <location>
        <begin position="384"/>
        <end position="386"/>
    </location>
</feature>
<feature type="helix" evidence="8">
    <location>
        <begin position="390"/>
        <end position="395"/>
    </location>
</feature>
<feature type="strand" evidence="5">
    <location>
        <begin position="397"/>
        <end position="399"/>
    </location>
</feature>
<feature type="helix" evidence="8">
    <location>
        <begin position="401"/>
        <end position="404"/>
    </location>
</feature>
<feature type="helix" evidence="8">
    <location>
        <begin position="407"/>
        <end position="414"/>
    </location>
</feature>
<feature type="turn" evidence="8">
    <location>
        <begin position="415"/>
        <end position="417"/>
    </location>
</feature>
<feature type="strand" evidence="6">
    <location>
        <begin position="420"/>
        <end position="422"/>
    </location>
</feature>
<feature type="helix" evidence="8">
    <location>
        <begin position="424"/>
        <end position="428"/>
    </location>
</feature>
<feature type="strand" evidence="8">
    <location>
        <begin position="433"/>
        <end position="438"/>
    </location>
</feature>
<feature type="helix" evidence="8">
    <location>
        <begin position="442"/>
        <end position="452"/>
    </location>
</feature>
<feature type="helix" evidence="8">
    <location>
        <begin position="464"/>
        <end position="468"/>
    </location>
</feature>
<feature type="helix" evidence="8">
    <location>
        <begin position="474"/>
        <end position="480"/>
    </location>
</feature>
<feature type="strand" evidence="8">
    <location>
        <begin position="487"/>
        <end position="491"/>
    </location>
</feature>
<feature type="helix" evidence="8">
    <location>
        <begin position="492"/>
        <end position="503"/>
    </location>
</feature>
<feature type="helix" evidence="8">
    <location>
        <begin position="515"/>
        <end position="526"/>
    </location>
</feature>
<feature type="strand" evidence="8">
    <location>
        <begin position="529"/>
        <end position="533"/>
    </location>
</feature>
<feature type="strand" evidence="8">
    <location>
        <begin position="536"/>
        <end position="540"/>
    </location>
</feature>
<feature type="helix" evidence="7">
    <location>
        <begin position="542"/>
        <end position="544"/>
    </location>
</feature>
<feature type="strand" evidence="8">
    <location>
        <begin position="547"/>
        <end position="549"/>
    </location>
</feature>
<feature type="turn" evidence="8">
    <location>
        <begin position="552"/>
        <end position="556"/>
    </location>
</feature>
<feature type="helix" evidence="8">
    <location>
        <begin position="557"/>
        <end position="572"/>
    </location>
</feature>
<feature type="strand" evidence="8">
    <location>
        <begin position="574"/>
        <end position="576"/>
    </location>
</feature>
<feature type="strand" evidence="8">
    <location>
        <begin position="581"/>
        <end position="583"/>
    </location>
</feature>
<feature type="strand" evidence="6">
    <location>
        <begin position="585"/>
        <end position="588"/>
    </location>
</feature>
<feature type="strand" evidence="6">
    <location>
        <begin position="592"/>
        <end position="599"/>
    </location>
</feature>
<feature type="helix" evidence="8">
    <location>
        <begin position="600"/>
        <end position="609"/>
    </location>
</feature>
<feature type="helix" evidence="8">
    <location>
        <begin position="612"/>
        <end position="619"/>
    </location>
</feature>
<feature type="turn" evidence="8">
    <location>
        <begin position="620"/>
        <end position="622"/>
    </location>
</feature>
<feature type="helix" evidence="8">
    <location>
        <begin position="624"/>
        <end position="627"/>
    </location>
</feature>
<proteinExistence type="evidence at protein level"/>
<name>NTP2_TOXGO</name>
<sequence>MWLPVYVPLLLVFGVSLSLPHGSLGTDSSSLRGVDADTEKRINVGKTHLQTLRNLETRCHDSLQALVVIDAGSSSTRTNVFLAKTRSCPNKGRSIDPDSIQLIREGKRFTGLRVVLEEWLDTYAGKDWESRPVDARLLFQYVPQMHEGAKKLMQLLEEDTVAILDSQLNEEQKVQVKALGIPVMLCSTAGVRDFHEWYRDALFVLLRHLINNPSPAHGYKFFTNPFWTRPITGAEEGLFAFITLNHLSRRLGEDPARCMIDEYGVKHCRNDLAGVVEVGGASAQIVFPLQEGTVLPSSVRAVNLQRERLLPERYPSADVVSVSFMQLGMASSAGLFLKELCSNDEFLQGGICSNPCLFKGFQQSCSAGEVEVRPDGSASVNEDVRKNRLKPLATYCSVHNPEISFKVTNEMQCRENSIDPTKPLAERMKIENCSIIEGTGNFDKCVSQVESILVAPKLPLPANIEAASSGFESVDQVFRFASSTAPMFITGREMLASIDTLKDHRLLRSDFSGDVEELAEAAREFCSSEVIIRTDGPVIQLPNARGEQKLNSLNFDLCKTMALTVSLLRHMAAGENQPSFIKWEKSIAGPDGKPLADLGWQVGVILHHVLFTEEWGRTAYEAGYSHNL</sequence>
<dbReference type="EC" id="3.6.1.15"/>
<dbReference type="EMBL" id="L39077">
    <property type="protein sequence ID" value="AAC41569.1"/>
    <property type="molecule type" value="mRNA"/>
</dbReference>
<dbReference type="EMBL" id="L39079">
    <property type="protein sequence ID" value="AAC41570.1"/>
    <property type="molecule type" value="mRNA"/>
</dbReference>
<dbReference type="EMBL" id="U96965">
    <property type="protein sequence ID" value="AAC80187.1"/>
    <property type="molecule type" value="Genomic_DNA"/>
</dbReference>
<dbReference type="EMBL" id="M33472">
    <property type="protein sequence ID" value="AAA30143.1"/>
    <property type="molecule type" value="Genomic_DNA"/>
</dbReference>
<dbReference type="PIR" id="A55421">
    <property type="entry name" value="A55421"/>
</dbReference>
<dbReference type="PDB" id="4A5B">
    <property type="method" value="X-ray"/>
    <property type="resolution" value="2.48 A"/>
    <property type="chains" value="A/B=26-628"/>
</dbReference>
<dbReference type="PDB" id="4JEP">
    <property type="method" value="X-ray"/>
    <property type="resolution" value="3.10 A"/>
    <property type="chains" value="A/B=26-628"/>
</dbReference>
<dbReference type="PDB" id="4KH4">
    <property type="method" value="X-ray"/>
    <property type="resolution" value="3.00 A"/>
    <property type="chains" value="A/B=26-628"/>
</dbReference>
<dbReference type="PDB" id="4KH5">
    <property type="method" value="X-ray"/>
    <property type="resolution" value="3.00 A"/>
    <property type="chains" value="A/B=26-628"/>
</dbReference>
<dbReference type="PDB" id="4KH6">
    <property type="method" value="X-ray"/>
    <property type="resolution" value="2.40 A"/>
    <property type="chains" value="A/B=26-628"/>
</dbReference>
<dbReference type="PDBsum" id="4A5B"/>
<dbReference type="PDBsum" id="4JEP"/>
<dbReference type="PDBsum" id="4KH4"/>
<dbReference type="PDBsum" id="4KH5"/>
<dbReference type="PDBsum" id="4KH6"/>
<dbReference type="SMR" id="Q27895"/>
<dbReference type="GlyCosmos" id="Q27895">
    <property type="glycosylation" value="1 site, No reported glycans"/>
</dbReference>
<dbReference type="VEuPathDB" id="ToxoDB:TGARI_371290"/>
<dbReference type="VEuPathDB" id="ToxoDB:TGCAST_358870"/>
<dbReference type="VEuPathDB" id="ToxoDB:TGCOUG_395210"/>
<dbReference type="VEuPathDB" id="ToxoDB:TGDOM2_278878"/>
<dbReference type="VEuPathDB" id="ToxoDB:TGDOM2_400630"/>
<dbReference type="VEuPathDB" id="ToxoDB:TGFOU_278882"/>
<dbReference type="VEuPathDB" id="ToxoDB:TGGT1_277270"/>
<dbReference type="VEuPathDB" id="ToxoDB:TGGT1_408820"/>
<dbReference type="VEuPathDB" id="ToxoDB:TGMAS_363610"/>
<dbReference type="VEuPathDB" id="ToxoDB:TGMAS_364050"/>
<dbReference type="VEuPathDB" id="ToxoDB:TGME49_277270"/>
<dbReference type="VEuPathDB" id="ToxoDB:TGME49_278878"/>
<dbReference type="VEuPathDB" id="ToxoDB:TGP89_277720"/>
<dbReference type="VEuPathDB" id="ToxoDB:TGPRC2_358870"/>
<dbReference type="VEuPathDB" id="ToxoDB:TGRH88_066160"/>
<dbReference type="VEuPathDB" id="ToxoDB:TGRUB_278882"/>
<dbReference type="VEuPathDB" id="ToxoDB:TGVAND_278882"/>
<dbReference type="VEuPathDB" id="ToxoDB:TGVEG_277270"/>
<dbReference type="VEuPathDB" id="ToxoDB:TGVEG_278878"/>
<dbReference type="BRENDA" id="3.6.1.15">
    <property type="organism ID" value="6411"/>
</dbReference>
<dbReference type="BRENDA" id="3.6.1.5">
    <property type="organism ID" value="6411"/>
</dbReference>
<dbReference type="BRENDA" id="3.6.1.6">
    <property type="organism ID" value="6411"/>
</dbReference>
<dbReference type="EvolutionaryTrace" id="Q27895"/>
<dbReference type="GO" id="GO:0016020">
    <property type="term" value="C:membrane"/>
    <property type="evidence" value="ECO:0007669"/>
    <property type="project" value="TreeGrafter"/>
</dbReference>
<dbReference type="GO" id="GO:0020003">
    <property type="term" value="C:symbiont-containing vacuole"/>
    <property type="evidence" value="ECO:0007669"/>
    <property type="project" value="UniProtKB-SubCell"/>
</dbReference>
<dbReference type="GO" id="GO:0017110">
    <property type="term" value="F:nucleoside diphosphate phosphatase activity"/>
    <property type="evidence" value="ECO:0007669"/>
    <property type="project" value="TreeGrafter"/>
</dbReference>
<dbReference type="GO" id="GO:0017111">
    <property type="term" value="F:ribonucleoside triphosphate phosphatase activity"/>
    <property type="evidence" value="ECO:0007669"/>
    <property type="project" value="UniProtKB-EC"/>
</dbReference>
<dbReference type="GO" id="GO:0009134">
    <property type="term" value="P:nucleoside diphosphate catabolic process"/>
    <property type="evidence" value="ECO:0007669"/>
    <property type="project" value="TreeGrafter"/>
</dbReference>
<dbReference type="CDD" id="cd24037">
    <property type="entry name" value="ASKHA_NBD_TgNTPase-like"/>
    <property type="match status" value="1"/>
</dbReference>
<dbReference type="Gene3D" id="3.30.420.530">
    <property type="match status" value="1"/>
</dbReference>
<dbReference type="Gene3D" id="3.30.420.540">
    <property type="match status" value="1"/>
</dbReference>
<dbReference type="InterPro" id="IPR000407">
    <property type="entry name" value="GDA1_CD39_NTPase"/>
</dbReference>
<dbReference type="InterPro" id="IPR017227">
    <property type="entry name" value="NTPase_alveloata"/>
</dbReference>
<dbReference type="PANTHER" id="PTHR11782">
    <property type="entry name" value="ADENOSINE/GUANOSINE DIPHOSPHATASE"/>
    <property type="match status" value="1"/>
</dbReference>
<dbReference type="PANTHER" id="PTHR11782:SF83">
    <property type="entry name" value="GUANOSINE-DIPHOSPHATASE"/>
    <property type="match status" value="1"/>
</dbReference>
<dbReference type="Pfam" id="PF01150">
    <property type="entry name" value="GDA1_CD39"/>
    <property type="match status" value="1"/>
</dbReference>
<dbReference type="PIRSF" id="PIRSF037506">
    <property type="entry name" value="NTPase"/>
    <property type="match status" value="1"/>
</dbReference>
<dbReference type="PROSITE" id="PS01238">
    <property type="entry name" value="GDA1_CD39_NTPASE"/>
    <property type="match status" value="1"/>
</dbReference>